<dbReference type="EC" id="2.7.7.3" evidence="1"/>
<dbReference type="EMBL" id="CP000936">
    <property type="protein sequence ID" value="ACA37423.1"/>
    <property type="molecule type" value="Genomic_DNA"/>
</dbReference>
<dbReference type="RefSeq" id="WP_001280746.1">
    <property type="nucleotide sequence ID" value="NC_010380.1"/>
</dbReference>
<dbReference type="SMR" id="B1I8S2"/>
<dbReference type="KEGG" id="spv:SPH_2111"/>
<dbReference type="HOGENOM" id="CLU_100149_0_1_9"/>
<dbReference type="UniPathway" id="UPA00241">
    <property type="reaction ID" value="UER00355"/>
</dbReference>
<dbReference type="Proteomes" id="UP000002163">
    <property type="component" value="Chromosome"/>
</dbReference>
<dbReference type="GO" id="GO:0005737">
    <property type="term" value="C:cytoplasm"/>
    <property type="evidence" value="ECO:0007669"/>
    <property type="project" value="UniProtKB-SubCell"/>
</dbReference>
<dbReference type="GO" id="GO:0005524">
    <property type="term" value="F:ATP binding"/>
    <property type="evidence" value="ECO:0007669"/>
    <property type="project" value="UniProtKB-KW"/>
</dbReference>
<dbReference type="GO" id="GO:0004595">
    <property type="term" value="F:pantetheine-phosphate adenylyltransferase activity"/>
    <property type="evidence" value="ECO:0007669"/>
    <property type="project" value="UniProtKB-UniRule"/>
</dbReference>
<dbReference type="GO" id="GO:0015937">
    <property type="term" value="P:coenzyme A biosynthetic process"/>
    <property type="evidence" value="ECO:0007669"/>
    <property type="project" value="UniProtKB-UniRule"/>
</dbReference>
<dbReference type="CDD" id="cd02163">
    <property type="entry name" value="PPAT"/>
    <property type="match status" value="1"/>
</dbReference>
<dbReference type="Gene3D" id="3.40.50.620">
    <property type="entry name" value="HUPs"/>
    <property type="match status" value="1"/>
</dbReference>
<dbReference type="HAMAP" id="MF_00151">
    <property type="entry name" value="PPAT_bact"/>
    <property type="match status" value="1"/>
</dbReference>
<dbReference type="InterPro" id="IPR004821">
    <property type="entry name" value="Cyt_trans-like"/>
</dbReference>
<dbReference type="InterPro" id="IPR001980">
    <property type="entry name" value="PPAT"/>
</dbReference>
<dbReference type="InterPro" id="IPR014729">
    <property type="entry name" value="Rossmann-like_a/b/a_fold"/>
</dbReference>
<dbReference type="NCBIfam" id="TIGR01510">
    <property type="entry name" value="coaD_prev_kdtB"/>
    <property type="match status" value="1"/>
</dbReference>
<dbReference type="NCBIfam" id="TIGR00125">
    <property type="entry name" value="cyt_tran_rel"/>
    <property type="match status" value="1"/>
</dbReference>
<dbReference type="PANTHER" id="PTHR21342">
    <property type="entry name" value="PHOSPHOPANTETHEINE ADENYLYLTRANSFERASE"/>
    <property type="match status" value="1"/>
</dbReference>
<dbReference type="PANTHER" id="PTHR21342:SF1">
    <property type="entry name" value="PHOSPHOPANTETHEINE ADENYLYLTRANSFERASE"/>
    <property type="match status" value="1"/>
</dbReference>
<dbReference type="Pfam" id="PF01467">
    <property type="entry name" value="CTP_transf_like"/>
    <property type="match status" value="1"/>
</dbReference>
<dbReference type="PRINTS" id="PR01020">
    <property type="entry name" value="LPSBIOSNTHSS"/>
</dbReference>
<dbReference type="SUPFAM" id="SSF52374">
    <property type="entry name" value="Nucleotidylyl transferase"/>
    <property type="match status" value="1"/>
</dbReference>
<reference key="1">
    <citation type="journal article" date="2010" name="Genome Biol.">
        <title>Structure and dynamics of the pan-genome of Streptococcus pneumoniae and closely related species.</title>
        <authorList>
            <person name="Donati C."/>
            <person name="Hiller N.L."/>
            <person name="Tettelin H."/>
            <person name="Muzzi A."/>
            <person name="Croucher N.J."/>
            <person name="Angiuoli S.V."/>
            <person name="Oggioni M."/>
            <person name="Dunning Hotopp J.C."/>
            <person name="Hu F.Z."/>
            <person name="Riley D.R."/>
            <person name="Covacci A."/>
            <person name="Mitchell T.J."/>
            <person name="Bentley S.D."/>
            <person name="Kilian M."/>
            <person name="Ehrlich G.D."/>
            <person name="Rappuoli R."/>
            <person name="Moxon E.R."/>
            <person name="Masignani V."/>
        </authorList>
    </citation>
    <scope>NUCLEOTIDE SEQUENCE [LARGE SCALE GENOMIC DNA]</scope>
    <source>
        <strain>Hungary19A-6</strain>
    </source>
</reference>
<protein>
    <recommendedName>
        <fullName evidence="1">Phosphopantetheine adenylyltransferase</fullName>
        <ecNumber evidence="1">2.7.7.3</ecNumber>
    </recommendedName>
    <alternativeName>
        <fullName evidence="1">Dephospho-CoA pyrophosphorylase</fullName>
    </alternativeName>
    <alternativeName>
        <fullName evidence="1">Pantetheine-phosphate adenylyltransferase</fullName>
        <shortName evidence="1">PPAT</shortName>
    </alternativeName>
</protein>
<proteinExistence type="inferred from homology"/>
<name>COAD_STRPI</name>
<comment type="function">
    <text evidence="1">Reversibly transfers an adenylyl group from ATP to 4'-phosphopantetheine, yielding dephospho-CoA (dPCoA) and pyrophosphate.</text>
</comment>
<comment type="catalytic activity">
    <reaction evidence="1">
        <text>(R)-4'-phosphopantetheine + ATP + H(+) = 3'-dephospho-CoA + diphosphate</text>
        <dbReference type="Rhea" id="RHEA:19801"/>
        <dbReference type="ChEBI" id="CHEBI:15378"/>
        <dbReference type="ChEBI" id="CHEBI:30616"/>
        <dbReference type="ChEBI" id="CHEBI:33019"/>
        <dbReference type="ChEBI" id="CHEBI:57328"/>
        <dbReference type="ChEBI" id="CHEBI:61723"/>
        <dbReference type="EC" id="2.7.7.3"/>
    </reaction>
</comment>
<comment type="cofactor">
    <cofactor evidence="1">
        <name>Mg(2+)</name>
        <dbReference type="ChEBI" id="CHEBI:18420"/>
    </cofactor>
</comment>
<comment type="pathway">
    <text evidence="1">Cofactor biosynthesis; coenzyme A biosynthesis; CoA from (R)-pantothenate: step 4/5.</text>
</comment>
<comment type="subunit">
    <text evidence="1">Homohexamer.</text>
</comment>
<comment type="subcellular location">
    <subcellularLocation>
        <location evidence="1">Cytoplasm</location>
    </subcellularLocation>
</comment>
<comment type="similarity">
    <text evidence="1">Belongs to the bacterial CoaD family.</text>
</comment>
<gene>
    <name evidence="1" type="primary">coaD</name>
    <name type="ordered locus">SPH_2111</name>
</gene>
<accession>B1I8S2</accession>
<keyword id="KW-0067">ATP-binding</keyword>
<keyword id="KW-0173">Coenzyme A biosynthesis</keyword>
<keyword id="KW-0963">Cytoplasm</keyword>
<keyword id="KW-0460">Magnesium</keyword>
<keyword id="KW-0547">Nucleotide-binding</keyword>
<keyword id="KW-0548">Nucleotidyltransferase</keyword>
<keyword id="KW-0808">Transferase</keyword>
<feature type="chain" id="PRO_1000096847" description="Phosphopantetheine adenylyltransferase">
    <location>
        <begin position="1"/>
        <end position="162"/>
    </location>
</feature>
<feature type="binding site" evidence="1">
    <location>
        <begin position="11"/>
        <end position="12"/>
    </location>
    <ligand>
        <name>ATP</name>
        <dbReference type="ChEBI" id="CHEBI:30616"/>
    </ligand>
</feature>
<feature type="binding site" evidence="1">
    <location>
        <position position="11"/>
    </location>
    <ligand>
        <name>substrate</name>
    </ligand>
</feature>
<feature type="binding site" evidence="1">
    <location>
        <position position="19"/>
    </location>
    <ligand>
        <name>ATP</name>
        <dbReference type="ChEBI" id="CHEBI:30616"/>
    </ligand>
</feature>
<feature type="binding site" evidence="1">
    <location>
        <position position="43"/>
    </location>
    <ligand>
        <name>substrate</name>
    </ligand>
</feature>
<feature type="binding site" evidence="1">
    <location>
        <position position="76"/>
    </location>
    <ligand>
        <name>substrate</name>
    </ligand>
</feature>
<feature type="binding site" evidence="1">
    <location>
        <position position="90"/>
    </location>
    <ligand>
        <name>substrate</name>
    </ligand>
</feature>
<feature type="binding site" evidence="1">
    <location>
        <begin position="91"/>
        <end position="93"/>
    </location>
    <ligand>
        <name>ATP</name>
        <dbReference type="ChEBI" id="CHEBI:30616"/>
    </ligand>
</feature>
<feature type="binding site" evidence="1">
    <location>
        <position position="101"/>
    </location>
    <ligand>
        <name>ATP</name>
        <dbReference type="ChEBI" id="CHEBI:30616"/>
    </ligand>
</feature>
<feature type="binding site" evidence="1">
    <location>
        <begin position="126"/>
        <end position="132"/>
    </location>
    <ligand>
        <name>ATP</name>
        <dbReference type="ChEBI" id="CHEBI:30616"/>
    </ligand>
</feature>
<feature type="site" description="Transition state stabilizer" evidence="1">
    <location>
        <position position="19"/>
    </location>
</feature>
<evidence type="ECO:0000255" key="1">
    <source>
        <dbReference type="HAMAP-Rule" id="MF_00151"/>
    </source>
</evidence>
<organism>
    <name type="scientific">Streptococcus pneumoniae (strain Hungary19A-6)</name>
    <dbReference type="NCBI Taxonomy" id="487214"/>
    <lineage>
        <taxon>Bacteria</taxon>
        <taxon>Bacillati</taxon>
        <taxon>Bacillota</taxon>
        <taxon>Bacilli</taxon>
        <taxon>Lactobacillales</taxon>
        <taxon>Streptococcaceae</taxon>
        <taxon>Streptococcus</taxon>
    </lineage>
</organism>
<sequence length="162" mass="18472">MSDKIGLFTGSFDPMTNGHLDIIERASRLFDKLYVGIFFNPHKQGFLPLENRKRGLEKALGHLENVEVVASHDKLVVDVAKRLGATFLVRGLRNAADLQYEASFDYYNHQLSSDIETIYLHSRPEHLYISSSGVRELLKFGQDIACHVPESILEEIRNEKKD</sequence>